<sequence length="194" mass="22066">MATPYVTDESGKYIAATQRPDGSWRKPRRVRDGYVPQEEVPVYENKFVKFFKSKPELPPGVCVETPPQTQTQPSDAAGLSRTAKRNMKRKEKRRQQGQETKSEPELQPEPELQPEPEPQGLSQQMQQLELSASQGPGAADSARRLKNLRKKLRQVEELQQRVLSGELKPSQEQLDKLGRAQALREELQQLEAHS</sequence>
<keyword id="KW-0175">Coiled coil</keyword>
<keyword id="KW-0963">Cytoplasm</keyword>
<keyword id="KW-0866">Nonsense-mediated mRNA decay</keyword>
<keyword id="KW-0539">Nucleus</keyword>
<keyword id="KW-1185">Reference proteome</keyword>
<keyword id="KW-0810">Translation regulation</keyword>
<gene>
    <name evidence="3" type="primary">pym1</name>
    <name type="synonym">pym</name>
    <name type="synonym">wibg</name>
    <name type="ORF">zgc:65891</name>
</gene>
<feature type="chain" id="PRO_0000287287" description="Partner of Y14 and mago">
    <location>
        <begin position="1"/>
        <end position="194"/>
    </location>
</feature>
<feature type="region of interest" description="Disordered" evidence="5">
    <location>
        <begin position="1"/>
        <end position="33"/>
    </location>
</feature>
<feature type="region of interest" description="Disordered" evidence="5">
    <location>
        <begin position="54"/>
        <end position="140"/>
    </location>
</feature>
<feature type="coiled-coil region" evidence="4">
    <location>
        <begin position="137"/>
        <end position="192"/>
    </location>
</feature>
<feature type="compositionally biased region" description="Basic residues" evidence="5">
    <location>
        <begin position="82"/>
        <end position="93"/>
    </location>
</feature>
<feature type="compositionally biased region" description="Basic and acidic residues" evidence="5">
    <location>
        <begin position="94"/>
        <end position="104"/>
    </location>
</feature>
<feature type="compositionally biased region" description="Polar residues" evidence="5">
    <location>
        <begin position="120"/>
        <end position="134"/>
    </location>
</feature>
<feature type="sequence conflict" description="In Ref. 1; AAH68187." evidence="6" ref="1">
    <original>S</original>
    <variation>P</variation>
    <location>
        <position position="102"/>
    </location>
</feature>
<proteinExistence type="evidence at transcript level"/>
<accession>Q6PH11</accession>
<accession>Q6NVC8</accession>
<name>PYM1_DANRE</name>
<evidence type="ECO:0000250" key="1"/>
<evidence type="ECO:0000250" key="2">
    <source>
        <dbReference type="UniProtKB" id="P82804"/>
    </source>
</evidence>
<evidence type="ECO:0000250" key="3">
    <source>
        <dbReference type="UniProtKB" id="Q9BRP8"/>
    </source>
</evidence>
<evidence type="ECO:0000255" key="4"/>
<evidence type="ECO:0000256" key="5">
    <source>
        <dbReference type="SAM" id="MobiDB-lite"/>
    </source>
</evidence>
<evidence type="ECO:0000305" key="6"/>
<reference key="1">
    <citation type="submission" date="2003-08" db="EMBL/GenBank/DDBJ databases">
        <authorList>
            <consortium name="NIH - Zebrafish Gene Collection (ZGC) project"/>
        </authorList>
    </citation>
    <scope>NUCLEOTIDE SEQUENCE [LARGE SCALE MRNA]</scope>
    <source>
        <tissue>Embryo</tissue>
        <tissue>Testis</tissue>
    </source>
</reference>
<organism>
    <name type="scientific">Danio rerio</name>
    <name type="common">Zebrafish</name>
    <name type="synonym">Brachydanio rerio</name>
    <dbReference type="NCBI Taxonomy" id="7955"/>
    <lineage>
        <taxon>Eukaryota</taxon>
        <taxon>Metazoa</taxon>
        <taxon>Chordata</taxon>
        <taxon>Craniata</taxon>
        <taxon>Vertebrata</taxon>
        <taxon>Euteleostomi</taxon>
        <taxon>Actinopterygii</taxon>
        <taxon>Neopterygii</taxon>
        <taxon>Teleostei</taxon>
        <taxon>Ostariophysi</taxon>
        <taxon>Cypriniformes</taxon>
        <taxon>Danionidae</taxon>
        <taxon>Danioninae</taxon>
        <taxon>Danio</taxon>
    </lineage>
</organism>
<comment type="function">
    <text evidence="1">Key regulator of the exon junction complex (EJC), a multiprotein complex that associates immediately upstream of the exon-exon junction on mRNAs and serves as a positional landmark for the intron exon structure of genes and directs post-transcriptional processes in the cytoplasm such as mRNA export, nonsense-mediated mRNA decay (NMD) or translation. Acts as an EJC disassembly factor, allowing translation-dependent EJC removal and recycling by disrupting mature EJC from spliced mRNAs. Its association with the 40S ribosomal subunit probably prevents a translation-independent disassembly of the EJC from spliced mRNAs, by restricting its activity to mRNAs that have been translated. Interferes with NMD and enhances translation of spliced mRNAs, probably by antagonizing EJC functions (By similarity).</text>
</comment>
<comment type="subunit">
    <text evidence="1">Interacts (via N-terminus) with magoh and rbm8a; the interaction is direct. Associates (eIF2A-like region) with the 40S ribosomal subunit and the 48S preinitiation complex (By similarity).</text>
</comment>
<comment type="subcellular location">
    <subcellularLocation>
        <location evidence="3">Cytoplasm</location>
    </subcellularLocation>
    <subcellularLocation>
        <location evidence="3">Nucleus</location>
        <location evidence="3">Nucleolus</location>
    </subcellularLocation>
    <subcellularLocation>
        <location evidence="3">Nucleus</location>
        <location evidence="3">Nucleoplasm</location>
    </subcellularLocation>
    <text evidence="3">Shuttles between the nucleus and the cytoplasm. Nuclear export is mediated by XPO1/CRM1.</text>
</comment>
<comment type="similarity">
    <text evidence="6">Belongs to the pym family.</text>
</comment>
<protein>
    <recommendedName>
        <fullName evidence="2">Partner of Y14 and mago</fullName>
    </recommendedName>
    <alternativeName>
        <fullName evidence="3">PYM homolog 1 exon junction complex-associated factor</fullName>
    </alternativeName>
    <alternativeName>
        <fullName>Protein wibg homolog</fullName>
    </alternativeName>
</protein>
<dbReference type="EMBL" id="BC056755">
    <property type="protein sequence ID" value="AAH56755.1"/>
    <property type="molecule type" value="mRNA"/>
</dbReference>
<dbReference type="EMBL" id="BC068187">
    <property type="protein sequence ID" value="AAH68187.1"/>
    <property type="molecule type" value="mRNA"/>
</dbReference>
<dbReference type="EMBL" id="BC100118">
    <property type="protein sequence ID" value="AAI00119.1"/>
    <property type="molecule type" value="mRNA"/>
</dbReference>
<dbReference type="RefSeq" id="NP_956888.2">
    <property type="nucleotide sequence ID" value="NM_200594.2"/>
</dbReference>
<dbReference type="SMR" id="Q6PH11"/>
<dbReference type="FunCoup" id="Q6PH11">
    <property type="interactions" value="1338"/>
</dbReference>
<dbReference type="STRING" id="7955.ENSDARP00000136874"/>
<dbReference type="PaxDb" id="7955-ENSDARP00000067667"/>
<dbReference type="Ensembl" id="ENSDART00000167361">
    <property type="protein sequence ID" value="ENSDARP00000136874"/>
    <property type="gene ID" value="ENSDARG00000046024"/>
</dbReference>
<dbReference type="GeneID" id="393566"/>
<dbReference type="KEGG" id="dre:393566"/>
<dbReference type="AGR" id="ZFIN:ZDB-GENE-040426-1464"/>
<dbReference type="CTD" id="84305"/>
<dbReference type="ZFIN" id="ZDB-GENE-040426-1464">
    <property type="gene designation" value="pym1"/>
</dbReference>
<dbReference type="eggNOG" id="KOG4325">
    <property type="taxonomic scope" value="Eukaryota"/>
</dbReference>
<dbReference type="InParanoid" id="Q6PH11"/>
<dbReference type="OMA" id="IPGCADS"/>
<dbReference type="OrthoDB" id="21625at2759"/>
<dbReference type="PhylomeDB" id="Q6PH11"/>
<dbReference type="TreeFam" id="TF324615"/>
<dbReference type="PRO" id="PR:Q6PH11"/>
<dbReference type="Proteomes" id="UP000000437">
    <property type="component" value="Chromosome 8"/>
</dbReference>
<dbReference type="Bgee" id="ENSDARG00000046024">
    <property type="expression patterns" value="Expressed in mature ovarian follicle and 21 other cell types or tissues"/>
</dbReference>
<dbReference type="GO" id="GO:0005737">
    <property type="term" value="C:cytoplasm"/>
    <property type="evidence" value="ECO:0000318"/>
    <property type="project" value="GO_Central"/>
</dbReference>
<dbReference type="GO" id="GO:0035145">
    <property type="term" value="C:exon-exon junction complex"/>
    <property type="evidence" value="ECO:0000250"/>
    <property type="project" value="UniProtKB"/>
</dbReference>
<dbReference type="GO" id="GO:0005730">
    <property type="term" value="C:nucleolus"/>
    <property type="evidence" value="ECO:0007669"/>
    <property type="project" value="UniProtKB-SubCell"/>
</dbReference>
<dbReference type="GO" id="GO:0005654">
    <property type="term" value="C:nucleoplasm"/>
    <property type="evidence" value="ECO:0007669"/>
    <property type="project" value="UniProtKB-SubCell"/>
</dbReference>
<dbReference type="GO" id="GO:0043022">
    <property type="term" value="F:ribosome binding"/>
    <property type="evidence" value="ECO:0000250"/>
    <property type="project" value="UniProtKB"/>
</dbReference>
<dbReference type="GO" id="GO:0003723">
    <property type="term" value="F:RNA binding"/>
    <property type="evidence" value="ECO:0000318"/>
    <property type="project" value="GO_Central"/>
</dbReference>
<dbReference type="GO" id="GO:1903259">
    <property type="term" value="P:exon-exon junction complex disassembly"/>
    <property type="evidence" value="ECO:0000318"/>
    <property type="project" value="GO_Central"/>
</dbReference>
<dbReference type="GO" id="GO:0000184">
    <property type="term" value="P:nuclear-transcribed mRNA catabolic process, nonsense-mediated decay"/>
    <property type="evidence" value="ECO:0000250"/>
    <property type="project" value="UniProtKB"/>
</dbReference>
<dbReference type="GO" id="GO:0045727">
    <property type="term" value="P:positive regulation of translation"/>
    <property type="evidence" value="ECO:0000250"/>
    <property type="project" value="UniProtKB"/>
</dbReference>
<dbReference type="InterPro" id="IPR039333">
    <property type="entry name" value="PYM1"/>
</dbReference>
<dbReference type="InterPro" id="IPR015362">
    <property type="entry name" value="WIBG_mago-bd"/>
</dbReference>
<dbReference type="InterPro" id="IPR036348">
    <property type="entry name" value="WIBG_N_sf"/>
</dbReference>
<dbReference type="PANTHER" id="PTHR22959:SF0">
    <property type="entry name" value="PARTNER OF Y14 AND MAGO"/>
    <property type="match status" value="1"/>
</dbReference>
<dbReference type="PANTHER" id="PTHR22959">
    <property type="entry name" value="PYM PROTEIN"/>
    <property type="match status" value="1"/>
</dbReference>
<dbReference type="Pfam" id="PF09282">
    <property type="entry name" value="Mago-bind"/>
    <property type="match status" value="1"/>
</dbReference>
<dbReference type="SMART" id="SM01273">
    <property type="entry name" value="Mago-bind"/>
    <property type="match status" value="1"/>
</dbReference>
<dbReference type="SUPFAM" id="SSF101931">
    <property type="entry name" value="Pym (Within the bgcn gene intron protein, WIBG), N-terminal domain"/>
    <property type="match status" value="1"/>
</dbReference>